<accession>B9IZB3</accession>
<proteinExistence type="inferred from homology"/>
<comment type="function">
    <text evidence="1">Phosphorylation of dTMP to form dTDP in both de novo and salvage pathways of dTTP synthesis.</text>
</comment>
<comment type="catalytic activity">
    <reaction evidence="1">
        <text>dTMP + ATP = dTDP + ADP</text>
        <dbReference type="Rhea" id="RHEA:13517"/>
        <dbReference type="ChEBI" id="CHEBI:30616"/>
        <dbReference type="ChEBI" id="CHEBI:58369"/>
        <dbReference type="ChEBI" id="CHEBI:63528"/>
        <dbReference type="ChEBI" id="CHEBI:456216"/>
        <dbReference type="EC" id="2.7.4.9"/>
    </reaction>
</comment>
<comment type="similarity">
    <text evidence="1">Belongs to the thymidylate kinase family.</text>
</comment>
<reference key="1">
    <citation type="journal article" date="2009" name="J. Bacteriol.">
        <title>Complete genome sequence of the extremophilic Bacillus cereus strain Q1 with industrial applications.</title>
        <authorList>
            <person name="Xiong Z."/>
            <person name="Jiang Y."/>
            <person name="Qi D."/>
            <person name="Lu H."/>
            <person name="Yang F."/>
            <person name="Yang J."/>
            <person name="Chen L."/>
            <person name="Sun L."/>
            <person name="Xu X."/>
            <person name="Xue Y."/>
            <person name="Zhu Y."/>
            <person name="Jin Q."/>
        </authorList>
    </citation>
    <scope>NUCLEOTIDE SEQUENCE [LARGE SCALE GENOMIC DNA]</scope>
    <source>
        <strain>Q1</strain>
    </source>
</reference>
<gene>
    <name evidence="1" type="primary">tmk</name>
    <name type="ordered locus">BCQ_0037</name>
</gene>
<protein>
    <recommendedName>
        <fullName evidence="1">Thymidylate kinase</fullName>
        <ecNumber evidence="1">2.7.4.9</ecNumber>
    </recommendedName>
    <alternativeName>
        <fullName evidence="1">dTMP kinase</fullName>
    </alternativeName>
</protein>
<evidence type="ECO:0000255" key="1">
    <source>
        <dbReference type="HAMAP-Rule" id="MF_00165"/>
    </source>
</evidence>
<feature type="chain" id="PRO_1000123558" description="Thymidylate kinase">
    <location>
        <begin position="1"/>
        <end position="208"/>
    </location>
</feature>
<feature type="binding site" evidence="1">
    <location>
        <begin position="10"/>
        <end position="17"/>
    </location>
    <ligand>
        <name>ATP</name>
        <dbReference type="ChEBI" id="CHEBI:30616"/>
    </ligand>
</feature>
<name>KTHY_BACCQ</name>
<keyword id="KW-0067">ATP-binding</keyword>
<keyword id="KW-0418">Kinase</keyword>
<keyword id="KW-0545">Nucleotide biosynthesis</keyword>
<keyword id="KW-0547">Nucleotide-binding</keyword>
<keyword id="KW-0808">Transferase</keyword>
<sequence length="208" mass="23788">MKGLFVTIEGPEGSGKTTLIQGLLPYFEQKEQKVMATREPGGIAISEEIRTILHKQEYTMMEARTEALLYAAARRQHLVEKVMPALNKDYLVLCDRFIDSSLAYQGYARGLGMDKVFEINRFATEDCMPSLTIYLDIEPEVGLARIAKDAGREVNRLDMEDISFHKRVREGYLQVVERFSDRIVLVNADQPMEKLIEEVIQVIEDKLL</sequence>
<organism>
    <name type="scientific">Bacillus cereus (strain Q1)</name>
    <dbReference type="NCBI Taxonomy" id="361100"/>
    <lineage>
        <taxon>Bacteria</taxon>
        <taxon>Bacillati</taxon>
        <taxon>Bacillota</taxon>
        <taxon>Bacilli</taxon>
        <taxon>Bacillales</taxon>
        <taxon>Bacillaceae</taxon>
        <taxon>Bacillus</taxon>
        <taxon>Bacillus cereus group</taxon>
    </lineage>
</organism>
<dbReference type="EC" id="2.7.4.9" evidence="1"/>
<dbReference type="EMBL" id="CP000227">
    <property type="protein sequence ID" value="ACM10557.1"/>
    <property type="molecule type" value="Genomic_DNA"/>
</dbReference>
<dbReference type="SMR" id="B9IZB3"/>
<dbReference type="KEGG" id="bcq:BCQ_0037"/>
<dbReference type="HOGENOM" id="CLU_049131_0_2_9"/>
<dbReference type="Proteomes" id="UP000000441">
    <property type="component" value="Chromosome"/>
</dbReference>
<dbReference type="GO" id="GO:0005829">
    <property type="term" value="C:cytosol"/>
    <property type="evidence" value="ECO:0007669"/>
    <property type="project" value="TreeGrafter"/>
</dbReference>
<dbReference type="GO" id="GO:0005524">
    <property type="term" value="F:ATP binding"/>
    <property type="evidence" value="ECO:0007669"/>
    <property type="project" value="UniProtKB-UniRule"/>
</dbReference>
<dbReference type="GO" id="GO:0004798">
    <property type="term" value="F:dTMP kinase activity"/>
    <property type="evidence" value="ECO:0007669"/>
    <property type="project" value="UniProtKB-UniRule"/>
</dbReference>
<dbReference type="GO" id="GO:0006233">
    <property type="term" value="P:dTDP biosynthetic process"/>
    <property type="evidence" value="ECO:0007669"/>
    <property type="project" value="InterPro"/>
</dbReference>
<dbReference type="GO" id="GO:0006235">
    <property type="term" value="P:dTTP biosynthetic process"/>
    <property type="evidence" value="ECO:0007669"/>
    <property type="project" value="UniProtKB-UniRule"/>
</dbReference>
<dbReference type="GO" id="GO:0006227">
    <property type="term" value="P:dUDP biosynthetic process"/>
    <property type="evidence" value="ECO:0007669"/>
    <property type="project" value="TreeGrafter"/>
</dbReference>
<dbReference type="CDD" id="cd01672">
    <property type="entry name" value="TMPK"/>
    <property type="match status" value="1"/>
</dbReference>
<dbReference type="FunFam" id="3.40.50.300:FF:000225">
    <property type="entry name" value="Thymidylate kinase"/>
    <property type="match status" value="1"/>
</dbReference>
<dbReference type="Gene3D" id="3.40.50.300">
    <property type="entry name" value="P-loop containing nucleotide triphosphate hydrolases"/>
    <property type="match status" value="1"/>
</dbReference>
<dbReference type="HAMAP" id="MF_00165">
    <property type="entry name" value="Thymidylate_kinase"/>
    <property type="match status" value="1"/>
</dbReference>
<dbReference type="InterPro" id="IPR027417">
    <property type="entry name" value="P-loop_NTPase"/>
</dbReference>
<dbReference type="InterPro" id="IPR039430">
    <property type="entry name" value="Thymidylate_kin-like_dom"/>
</dbReference>
<dbReference type="InterPro" id="IPR018095">
    <property type="entry name" value="Thymidylate_kin_CS"/>
</dbReference>
<dbReference type="InterPro" id="IPR018094">
    <property type="entry name" value="Thymidylate_kinase"/>
</dbReference>
<dbReference type="NCBIfam" id="TIGR00041">
    <property type="entry name" value="DTMP_kinase"/>
    <property type="match status" value="1"/>
</dbReference>
<dbReference type="PANTHER" id="PTHR10344">
    <property type="entry name" value="THYMIDYLATE KINASE"/>
    <property type="match status" value="1"/>
</dbReference>
<dbReference type="PANTHER" id="PTHR10344:SF4">
    <property type="entry name" value="UMP-CMP KINASE 2, MITOCHONDRIAL"/>
    <property type="match status" value="1"/>
</dbReference>
<dbReference type="Pfam" id="PF02223">
    <property type="entry name" value="Thymidylate_kin"/>
    <property type="match status" value="1"/>
</dbReference>
<dbReference type="SUPFAM" id="SSF52540">
    <property type="entry name" value="P-loop containing nucleoside triphosphate hydrolases"/>
    <property type="match status" value="1"/>
</dbReference>
<dbReference type="PROSITE" id="PS01331">
    <property type="entry name" value="THYMIDYLATE_KINASE"/>
    <property type="match status" value="1"/>
</dbReference>